<keyword id="KW-0967">Endosome</keyword>
<keyword id="KW-0472">Membrane</keyword>
<keyword id="KW-0653">Protein transport</keyword>
<keyword id="KW-1185">Reference proteome</keyword>
<keyword id="KW-0812">Transmembrane</keyword>
<keyword id="KW-1133">Transmembrane helix</keyword>
<keyword id="KW-0813">Transport</keyword>
<proteinExistence type="evidence at transcript level"/>
<organism>
    <name type="scientific">Schizosaccharomyces pombe (strain 972 / ATCC 24843)</name>
    <name type="common">Fission yeast</name>
    <dbReference type="NCBI Taxonomy" id="284812"/>
    <lineage>
        <taxon>Eukaryota</taxon>
        <taxon>Fungi</taxon>
        <taxon>Dikarya</taxon>
        <taxon>Ascomycota</taxon>
        <taxon>Taphrinomycotina</taxon>
        <taxon>Schizosaccharomycetes</taxon>
        <taxon>Schizosaccharomycetales</taxon>
        <taxon>Schizosaccharomycetaceae</taxon>
        <taxon>Schizosaccharomyces</taxon>
    </lineage>
</organism>
<accession>O14200</accession>
<accession>P78842</accession>
<dbReference type="EMBL" id="CU329670">
    <property type="protein sequence ID" value="CAB10855.1"/>
    <property type="molecule type" value="Genomic_DNA"/>
</dbReference>
<dbReference type="EMBL" id="D89191">
    <property type="protein sequence ID" value="BAA13853.1"/>
    <property type="molecule type" value="mRNA"/>
</dbReference>
<dbReference type="PIR" id="T38959">
    <property type="entry name" value="T38959"/>
</dbReference>
<dbReference type="PIR" id="T42750">
    <property type="entry name" value="T42750"/>
</dbReference>
<dbReference type="RefSeq" id="NP_593362.1">
    <property type="nucleotide sequence ID" value="NM_001018794.2"/>
</dbReference>
<dbReference type="SMR" id="O14200"/>
<dbReference type="STRING" id="284812.O14200"/>
<dbReference type="iPTMnet" id="O14200"/>
<dbReference type="PaxDb" id="4896-SPAC5D6.07c.1"/>
<dbReference type="EnsemblFungi" id="SPAC5D6.07c.1">
    <property type="protein sequence ID" value="SPAC5D6.07c.1:pep"/>
    <property type="gene ID" value="SPAC5D6.07c"/>
</dbReference>
<dbReference type="GeneID" id="2541884"/>
<dbReference type="KEGG" id="spo:2541884"/>
<dbReference type="PomBase" id="SPAC5D6.07c">
    <property type="gene designation" value="pxa1"/>
</dbReference>
<dbReference type="VEuPathDB" id="FungiDB:SPAC5D6.07c"/>
<dbReference type="eggNOG" id="ENOG502R9KS">
    <property type="taxonomic scope" value="Eukaryota"/>
</dbReference>
<dbReference type="HOGENOM" id="CLU_551142_0_0_1"/>
<dbReference type="InParanoid" id="O14200"/>
<dbReference type="OMA" id="NELIYCR"/>
<dbReference type="PRO" id="PR:O14200"/>
<dbReference type="Proteomes" id="UP000002485">
    <property type="component" value="Chromosome I"/>
</dbReference>
<dbReference type="GO" id="GO:0005737">
    <property type="term" value="C:cytoplasm"/>
    <property type="evidence" value="ECO:0007005"/>
    <property type="project" value="PomBase"/>
</dbReference>
<dbReference type="GO" id="GO:0005829">
    <property type="term" value="C:cytosol"/>
    <property type="evidence" value="ECO:0007669"/>
    <property type="project" value="GOC"/>
</dbReference>
<dbReference type="GO" id="GO:0005768">
    <property type="term" value="C:endosome"/>
    <property type="evidence" value="ECO:0000314"/>
    <property type="project" value="PomBase"/>
</dbReference>
<dbReference type="GO" id="GO:0010008">
    <property type="term" value="C:endosome membrane"/>
    <property type="evidence" value="ECO:0000303"/>
    <property type="project" value="PomBase"/>
</dbReference>
<dbReference type="GO" id="GO:0032511">
    <property type="term" value="P:late endosome to vacuole transport via multivesicular body sorting pathway"/>
    <property type="evidence" value="ECO:0000315"/>
    <property type="project" value="PomBase"/>
</dbReference>
<dbReference type="GO" id="GO:0015031">
    <property type="term" value="P:protein transport"/>
    <property type="evidence" value="ECO:0007669"/>
    <property type="project" value="UniProtKB-KW"/>
</dbReference>
<dbReference type="GO" id="GO:0042147">
    <property type="term" value="P:retrograde transport, endosome to Golgi"/>
    <property type="evidence" value="ECO:0000315"/>
    <property type="project" value="PomBase"/>
</dbReference>
<dbReference type="GO" id="GO:0007033">
    <property type="term" value="P:vacuole organization"/>
    <property type="evidence" value="ECO:0000315"/>
    <property type="project" value="PomBase"/>
</dbReference>
<dbReference type="InterPro" id="IPR003114">
    <property type="entry name" value="Phox_assoc"/>
</dbReference>
<dbReference type="PANTHER" id="PTHR22775">
    <property type="entry name" value="SORTING NEXIN"/>
    <property type="match status" value="1"/>
</dbReference>
<dbReference type="PANTHER" id="PTHR22775:SF3">
    <property type="entry name" value="SORTING NEXIN-13"/>
    <property type="match status" value="1"/>
</dbReference>
<dbReference type="Pfam" id="PF02194">
    <property type="entry name" value="PXA"/>
    <property type="match status" value="1"/>
</dbReference>
<dbReference type="SMART" id="SM00313">
    <property type="entry name" value="PXA"/>
    <property type="match status" value="1"/>
</dbReference>
<dbReference type="PROSITE" id="PS51207">
    <property type="entry name" value="PXA"/>
    <property type="match status" value="1"/>
</dbReference>
<comment type="function">
    <text evidence="4">Required for required for normal vacuolar morphology and for vacuolar protein transport. Also required for endosome-to-Golgi protein transport.</text>
</comment>
<comment type="subcellular location">
    <subcellularLocation>
        <location evidence="4">Endosome membrane</location>
        <topology evidence="4">Multi-pass membrane protein</topology>
    </subcellularLocation>
</comment>
<feature type="chain" id="PRO_0000116654" description="PXA domain protein 1">
    <location>
        <begin position="1"/>
        <end position="495"/>
    </location>
</feature>
<feature type="transmembrane region" description="Helical" evidence="1">
    <location>
        <begin position="7"/>
        <end position="27"/>
    </location>
</feature>
<feature type="transmembrane region" description="Helical" evidence="1">
    <location>
        <begin position="235"/>
        <end position="255"/>
    </location>
</feature>
<feature type="transmembrane region" description="Helical" evidence="1">
    <location>
        <begin position="446"/>
        <end position="466"/>
    </location>
</feature>
<feature type="domain" description="PXA" evidence="2">
    <location>
        <begin position="1"/>
        <end position="174"/>
    </location>
</feature>
<feature type="region of interest" description="Disordered" evidence="3">
    <location>
        <begin position="402"/>
        <end position="436"/>
    </location>
</feature>
<feature type="compositionally biased region" description="Polar residues" evidence="3">
    <location>
        <begin position="402"/>
        <end position="419"/>
    </location>
</feature>
<feature type="compositionally biased region" description="Polar residues" evidence="3">
    <location>
        <begin position="427"/>
        <end position="436"/>
    </location>
</feature>
<feature type="sequence conflict" description="In Ref. 2; BAA13853." evidence="5" ref="2">
    <original>S</original>
    <variation>A</variation>
    <location>
        <position position="292"/>
    </location>
</feature>
<protein>
    <recommendedName>
        <fullName>PXA domain protein 1</fullName>
    </recommendedName>
</protein>
<sequence>MAKLSSLLNPIISKILEIYVYSWYSGISKDALFPSQCEQVGGSIVHELEKRLSRQDAMDLLFYEIPFLLIKHIENTEEAKLRFALPQGQILEIDTIYHSLHPHIALEKEENELVYCRLLVEDILKYLLPATNSKSEIECVILREALAVQIHKSIQVASSPETMYKFIIYLSKAILQPSRRPWKESITTAVRWVWHAFRILLITRGVPYFSTAWFQFYLKLFSQKDNVSSSDLTRWFFFYTLLYPWIALVSAFVAETMTLCCIVTIFYDKNVNRQWKQYILTSVSNMDKGNPSGGSQSTNVTTFRRFSQSSYPRRSNYRRRISTSSKSLYELSPSKFKSIPITSNPPPMLNLSKGSTSVEPTFCETNASVALSTVTSTPVFSTDSSPLSSRTRENLLSLIPSAVSSPTKANTNKSHQRSFSIPKATKDSQTPSENSAATLKQAAIDAYSQIPVIPFFLPSDKLIMLVESEYRNKHIFYSLLNSFTMVMFPELRHTK</sequence>
<name>PXA1_SCHPO</name>
<evidence type="ECO:0000255" key="1"/>
<evidence type="ECO:0000255" key="2">
    <source>
        <dbReference type="PROSITE-ProRule" id="PRU00553"/>
    </source>
</evidence>
<evidence type="ECO:0000256" key="3">
    <source>
        <dbReference type="SAM" id="MobiDB-lite"/>
    </source>
</evidence>
<evidence type="ECO:0000269" key="4">
    <source>
    </source>
</evidence>
<evidence type="ECO:0000305" key="5"/>
<reference key="1">
    <citation type="journal article" date="2002" name="Nature">
        <title>The genome sequence of Schizosaccharomyces pombe.</title>
        <authorList>
            <person name="Wood V."/>
            <person name="Gwilliam R."/>
            <person name="Rajandream M.A."/>
            <person name="Lyne M.H."/>
            <person name="Lyne R."/>
            <person name="Stewart A."/>
            <person name="Sgouros J.G."/>
            <person name="Peat N."/>
            <person name="Hayles J."/>
            <person name="Baker S.G."/>
            <person name="Basham D."/>
            <person name="Bowman S."/>
            <person name="Brooks K."/>
            <person name="Brown D."/>
            <person name="Brown S."/>
            <person name="Chillingworth T."/>
            <person name="Churcher C.M."/>
            <person name="Collins M."/>
            <person name="Connor R."/>
            <person name="Cronin A."/>
            <person name="Davis P."/>
            <person name="Feltwell T."/>
            <person name="Fraser A."/>
            <person name="Gentles S."/>
            <person name="Goble A."/>
            <person name="Hamlin N."/>
            <person name="Harris D.E."/>
            <person name="Hidalgo J."/>
            <person name="Hodgson G."/>
            <person name="Holroyd S."/>
            <person name="Hornsby T."/>
            <person name="Howarth S."/>
            <person name="Huckle E.J."/>
            <person name="Hunt S."/>
            <person name="Jagels K."/>
            <person name="James K.D."/>
            <person name="Jones L."/>
            <person name="Jones M."/>
            <person name="Leather S."/>
            <person name="McDonald S."/>
            <person name="McLean J."/>
            <person name="Mooney P."/>
            <person name="Moule S."/>
            <person name="Mungall K.L."/>
            <person name="Murphy L.D."/>
            <person name="Niblett D."/>
            <person name="Odell C."/>
            <person name="Oliver K."/>
            <person name="O'Neil S."/>
            <person name="Pearson D."/>
            <person name="Quail M.A."/>
            <person name="Rabbinowitsch E."/>
            <person name="Rutherford K.M."/>
            <person name="Rutter S."/>
            <person name="Saunders D."/>
            <person name="Seeger K."/>
            <person name="Sharp S."/>
            <person name="Skelton J."/>
            <person name="Simmonds M.N."/>
            <person name="Squares R."/>
            <person name="Squares S."/>
            <person name="Stevens K."/>
            <person name="Taylor K."/>
            <person name="Taylor R.G."/>
            <person name="Tivey A."/>
            <person name="Walsh S.V."/>
            <person name="Warren T."/>
            <person name="Whitehead S."/>
            <person name="Woodward J.R."/>
            <person name="Volckaert G."/>
            <person name="Aert R."/>
            <person name="Robben J."/>
            <person name="Grymonprez B."/>
            <person name="Weltjens I."/>
            <person name="Vanstreels E."/>
            <person name="Rieger M."/>
            <person name="Schaefer M."/>
            <person name="Mueller-Auer S."/>
            <person name="Gabel C."/>
            <person name="Fuchs M."/>
            <person name="Duesterhoeft A."/>
            <person name="Fritzc C."/>
            <person name="Holzer E."/>
            <person name="Moestl D."/>
            <person name="Hilbert H."/>
            <person name="Borzym K."/>
            <person name="Langer I."/>
            <person name="Beck A."/>
            <person name="Lehrach H."/>
            <person name="Reinhardt R."/>
            <person name="Pohl T.M."/>
            <person name="Eger P."/>
            <person name="Zimmermann W."/>
            <person name="Wedler H."/>
            <person name="Wambutt R."/>
            <person name="Purnelle B."/>
            <person name="Goffeau A."/>
            <person name="Cadieu E."/>
            <person name="Dreano S."/>
            <person name="Gloux S."/>
            <person name="Lelaure V."/>
            <person name="Mottier S."/>
            <person name="Galibert F."/>
            <person name="Aves S.J."/>
            <person name="Xiang Z."/>
            <person name="Hunt C."/>
            <person name="Moore K."/>
            <person name="Hurst S.M."/>
            <person name="Lucas M."/>
            <person name="Rochet M."/>
            <person name="Gaillardin C."/>
            <person name="Tallada V.A."/>
            <person name="Garzon A."/>
            <person name="Thode G."/>
            <person name="Daga R.R."/>
            <person name="Cruzado L."/>
            <person name="Jimenez J."/>
            <person name="Sanchez M."/>
            <person name="del Rey F."/>
            <person name="Benito J."/>
            <person name="Dominguez A."/>
            <person name="Revuelta J.L."/>
            <person name="Moreno S."/>
            <person name="Armstrong J."/>
            <person name="Forsburg S.L."/>
            <person name="Cerutti L."/>
            <person name="Lowe T."/>
            <person name="McCombie W.R."/>
            <person name="Paulsen I."/>
            <person name="Potashkin J."/>
            <person name="Shpakovski G.V."/>
            <person name="Ussery D."/>
            <person name="Barrell B.G."/>
            <person name="Nurse P."/>
        </authorList>
    </citation>
    <scope>NUCLEOTIDE SEQUENCE [LARGE SCALE GENOMIC DNA]</scope>
    <source>
        <strain>972 / ATCC 24843</strain>
    </source>
</reference>
<reference key="2">
    <citation type="journal article" date="1997" name="DNA Res.">
        <title>Identification of open reading frames in Schizosaccharomyces pombe cDNAs.</title>
        <authorList>
            <person name="Yoshioka S."/>
            <person name="Kato K."/>
            <person name="Nakai K."/>
            <person name="Okayama H."/>
            <person name="Nojima H."/>
        </authorList>
    </citation>
    <scope>NUCLEOTIDE SEQUENCE [LARGE SCALE MRNA] OF 175-495</scope>
    <source>
        <strain>PR745</strain>
    </source>
</reference>
<reference key="3">
    <citation type="journal article" date="2008" name="Biosci. Biotechnol. Biochem.">
        <title>PXA domain-containing protein Pxa1 is required for normal vacuole function and morphology in Schizosaccharomyces pombe.</title>
        <authorList>
            <person name="Hosomi A."/>
            <person name="Kawanishi Y.Y."/>
            <person name="Tanaka N."/>
            <person name="Takegawa K."/>
        </authorList>
    </citation>
    <scope>FUNCTION</scope>
    <scope>SUBCELLULAR LOCATION</scope>
</reference>
<gene>
    <name type="primary">pxa1</name>
    <name type="ORF">SPAC5D6.07c</name>
</gene>